<comment type="function">
    <text evidence="1">Catalyzes the ATP-dependent phosphorylation of thiamine-monophosphate (TMP) to form thiamine-pyrophosphate (TPP), the active form of vitamin B1.</text>
</comment>
<comment type="catalytic activity">
    <reaction evidence="1">
        <text>thiamine phosphate + ATP = thiamine diphosphate + ADP</text>
        <dbReference type="Rhea" id="RHEA:15913"/>
        <dbReference type="ChEBI" id="CHEBI:30616"/>
        <dbReference type="ChEBI" id="CHEBI:37575"/>
        <dbReference type="ChEBI" id="CHEBI:58937"/>
        <dbReference type="ChEBI" id="CHEBI:456216"/>
        <dbReference type="EC" id="2.7.4.16"/>
    </reaction>
</comment>
<comment type="pathway">
    <text evidence="1">Cofactor biosynthesis; thiamine diphosphate biosynthesis; thiamine diphosphate from thiamine phosphate: step 1/1.</text>
</comment>
<comment type="miscellaneous">
    <text evidence="1">Reaction mechanism of ThiL seems to utilize a direct, inline transfer of the gamma-phosphate of ATP to TMP rather than a phosphorylated enzyme intermediate.</text>
</comment>
<comment type="similarity">
    <text evidence="1">Belongs to the thiamine-monophosphate kinase family.</text>
</comment>
<proteinExistence type="inferred from homology"/>
<keyword id="KW-0067">ATP-binding</keyword>
<keyword id="KW-0418">Kinase</keyword>
<keyword id="KW-0460">Magnesium</keyword>
<keyword id="KW-0479">Metal-binding</keyword>
<keyword id="KW-0547">Nucleotide-binding</keyword>
<keyword id="KW-1185">Reference proteome</keyword>
<keyword id="KW-0784">Thiamine biosynthesis</keyword>
<keyword id="KW-0808">Transferase</keyword>
<evidence type="ECO:0000255" key="1">
    <source>
        <dbReference type="HAMAP-Rule" id="MF_02128"/>
    </source>
</evidence>
<gene>
    <name evidence="1" type="primary">thiL</name>
    <name type="ordered locus">BU460</name>
</gene>
<dbReference type="EC" id="2.7.4.16" evidence="1"/>
<dbReference type="EMBL" id="BA000003">
    <property type="protein sequence ID" value="BAB13157.1"/>
    <property type="molecule type" value="Genomic_DNA"/>
</dbReference>
<dbReference type="RefSeq" id="NP_240271.1">
    <property type="nucleotide sequence ID" value="NC_002528.1"/>
</dbReference>
<dbReference type="RefSeq" id="WP_009874412.1">
    <property type="nucleotide sequence ID" value="NC_002528.1"/>
</dbReference>
<dbReference type="SMR" id="P57532"/>
<dbReference type="STRING" id="563178.BUAP5A_453"/>
<dbReference type="EnsemblBacteria" id="BAB13157">
    <property type="protein sequence ID" value="BAB13157"/>
    <property type="gene ID" value="BAB13157"/>
</dbReference>
<dbReference type="KEGG" id="buc:BU460"/>
<dbReference type="PATRIC" id="fig|107806.10.peg.469"/>
<dbReference type="eggNOG" id="COG0611">
    <property type="taxonomic scope" value="Bacteria"/>
</dbReference>
<dbReference type="HOGENOM" id="CLU_046964_3_0_6"/>
<dbReference type="UniPathway" id="UPA00060">
    <property type="reaction ID" value="UER00142"/>
</dbReference>
<dbReference type="Proteomes" id="UP000001806">
    <property type="component" value="Chromosome"/>
</dbReference>
<dbReference type="GO" id="GO:0005524">
    <property type="term" value="F:ATP binding"/>
    <property type="evidence" value="ECO:0007669"/>
    <property type="project" value="UniProtKB-UniRule"/>
</dbReference>
<dbReference type="GO" id="GO:0000287">
    <property type="term" value="F:magnesium ion binding"/>
    <property type="evidence" value="ECO:0007669"/>
    <property type="project" value="UniProtKB-UniRule"/>
</dbReference>
<dbReference type="GO" id="GO:0009030">
    <property type="term" value="F:thiamine-phosphate kinase activity"/>
    <property type="evidence" value="ECO:0007669"/>
    <property type="project" value="UniProtKB-UniRule"/>
</dbReference>
<dbReference type="GO" id="GO:0009228">
    <property type="term" value="P:thiamine biosynthetic process"/>
    <property type="evidence" value="ECO:0007669"/>
    <property type="project" value="UniProtKB-KW"/>
</dbReference>
<dbReference type="GO" id="GO:0009229">
    <property type="term" value="P:thiamine diphosphate biosynthetic process"/>
    <property type="evidence" value="ECO:0007669"/>
    <property type="project" value="UniProtKB-UniRule"/>
</dbReference>
<dbReference type="CDD" id="cd02194">
    <property type="entry name" value="ThiL"/>
    <property type="match status" value="1"/>
</dbReference>
<dbReference type="Gene3D" id="3.90.650.10">
    <property type="entry name" value="PurM-like C-terminal domain"/>
    <property type="match status" value="1"/>
</dbReference>
<dbReference type="Gene3D" id="3.30.1330.10">
    <property type="entry name" value="PurM-like, N-terminal domain"/>
    <property type="match status" value="1"/>
</dbReference>
<dbReference type="HAMAP" id="MF_02128">
    <property type="entry name" value="TMP_kinase"/>
    <property type="match status" value="1"/>
</dbReference>
<dbReference type="InterPro" id="IPR010918">
    <property type="entry name" value="PurM-like_C_dom"/>
</dbReference>
<dbReference type="InterPro" id="IPR036676">
    <property type="entry name" value="PurM-like_C_sf"/>
</dbReference>
<dbReference type="InterPro" id="IPR016188">
    <property type="entry name" value="PurM-like_N"/>
</dbReference>
<dbReference type="InterPro" id="IPR036921">
    <property type="entry name" value="PurM-like_N_sf"/>
</dbReference>
<dbReference type="InterPro" id="IPR006283">
    <property type="entry name" value="ThiL-like"/>
</dbReference>
<dbReference type="NCBIfam" id="TIGR01379">
    <property type="entry name" value="thiL"/>
    <property type="match status" value="1"/>
</dbReference>
<dbReference type="PANTHER" id="PTHR30270">
    <property type="entry name" value="THIAMINE-MONOPHOSPHATE KINASE"/>
    <property type="match status" value="1"/>
</dbReference>
<dbReference type="PANTHER" id="PTHR30270:SF0">
    <property type="entry name" value="THIAMINE-MONOPHOSPHATE KINASE"/>
    <property type="match status" value="1"/>
</dbReference>
<dbReference type="Pfam" id="PF00586">
    <property type="entry name" value="AIRS"/>
    <property type="match status" value="1"/>
</dbReference>
<dbReference type="Pfam" id="PF02769">
    <property type="entry name" value="AIRS_C"/>
    <property type="match status" value="1"/>
</dbReference>
<dbReference type="PIRSF" id="PIRSF005303">
    <property type="entry name" value="Thiam_monoph_kin"/>
    <property type="match status" value="1"/>
</dbReference>
<dbReference type="SUPFAM" id="SSF56042">
    <property type="entry name" value="PurM C-terminal domain-like"/>
    <property type="match status" value="1"/>
</dbReference>
<dbReference type="SUPFAM" id="SSF55326">
    <property type="entry name" value="PurM N-terminal domain-like"/>
    <property type="match status" value="1"/>
</dbReference>
<sequence length="323" mass="36391">MKYTEFEIISKYFKRNQKKDVNEIKGIGDDSALIKIPKNNILAISTDTLVEGTHFLKNISPEDLGYKTVAVNLSDLAAMGAEPKWTTLSITMPESNNIWLKKFSSSFFKILNKYNVRLIGGDTNRGSLSITLSMYGLLKKQIALLRSNANIGDLIYVTGTLGESAAGLFLLKKNIFIKNVNIRNYLIKKHLNPIPRVSEGMALRKIANAAIDLSDGLIADLDHILNDSQCGANINLNKIPISKVLIDNFQSQNYLNWALNVGEDYELCFTISKKNIDKLKIIKKKFLVNFTCIGYITPIEQGFNLFDNQKKIIFKKKGFNHFD</sequence>
<feature type="chain" id="PRO_0000096192" description="Thiamine-monophosphate kinase">
    <location>
        <begin position="1"/>
        <end position="323"/>
    </location>
</feature>
<feature type="binding site" evidence="1">
    <location>
        <position position="30"/>
    </location>
    <ligand>
        <name>Mg(2+)</name>
        <dbReference type="ChEBI" id="CHEBI:18420"/>
        <label>3</label>
    </ligand>
</feature>
<feature type="binding site" evidence="1">
    <location>
        <position position="30"/>
    </location>
    <ligand>
        <name>Mg(2+)</name>
        <dbReference type="ChEBI" id="CHEBI:18420"/>
        <label>4</label>
    </ligand>
</feature>
<feature type="binding site" evidence="1">
    <location>
        <position position="45"/>
    </location>
    <ligand>
        <name>Mg(2+)</name>
        <dbReference type="ChEBI" id="CHEBI:18420"/>
        <label>4</label>
    </ligand>
</feature>
<feature type="binding site" evidence="1">
    <location>
        <position position="46"/>
    </location>
    <ligand>
        <name>Mg(2+)</name>
        <dbReference type="ChEBI" id="CHEBI:18420"/>
        <label>1</label>
    </ligand>
</feature>
<feature type="binding site" evidence="1">
    <location>
        <position position="47"/>
    </location>
    <ligand>
        <name>Mg(2+)</name>
        <dbReference type="ChEBI" id="CHEBI:18420"/>
        <label>1</label>
    </ligand>
</feature>
<feature type="binding site" evidence="1">
    <location>
        <position position="47"/>
    </location>
    <ligand>
        <name>Mg(2+)</name>
        <dbReference type="ChEBI" id="CHEBI:18420"/>
        <label>2</label>
    </ligand>
</feature>
<feature type="binding site" evidence="1">
    <location>
        <position position="54"/>
    </location>
    <ligand>
        <name>substrate</name>
    </ligand>
</feature>
<feature type="binding site" evidence="1">
    <location>
        <position position="75"/>
    </location>
    <ligand>
        <name>Mg(2+)</name>
        <dbReference type="ChEBI" id="CHEBI:18420"/>
        <label>2</label>
    </ligand>
</feature>
<feature type="binding site" evidence="1">
    <location>
        <position position="75"/>
    </location>
    <ligand>
        <name>Mg(2+)</name>
        <dbReference type="ChEBI" id="CHEBI:18420"/>
        <label>3</label>
    </ligand>
</feature>
<feature type="binding site" evidence="1">
    <location>
        <position position="75"/>
    </location>
    <ligand>
        <name>Mg(2+)</name>
        <dbReference type="ChEBI" id="CHEBI:18420"/>
        <label>4</label>
    </ligand>
</feature>
<feature type="binding site" evidence="1">
    <location>
        <begin position="121"/>
        <end position="122"/>
    </location>
    <ligand>
        <name>ATP</name>
        <dbReference type="ChEBI" id="CHEBI:30616"/>
    </ligand>
</feature>
<feature type="binding site" evidence="1">
    <location>
        <position position="122"/>
    </location>
    <ligand>
        <name>Mg(2+)</name>
        <dbReference type="ChEBI" id="CHEBI:18420"/>
        <label>1</label>
    </ligand>
</feature>
<feature type="binding site" evidence="1">
    <location>
        <position position="146"/>
    </location>
    <ligand>
        <name>ATP</name>
        <dbReference type="ChEBI" id="CHEBI:30616"/>
    </ligand>
</feature>
<feature type="binding site" evidence="1">
    <location>
        <position position="212"/>
    </location>
    <ligand>
        <name>Mg(2+)</name>
        <dbReference type="ChEBI" id="CHEBI:18420"/>
        <label>3</label>
    </ligand>
</feature>
<feature type="binding site" evidence="1">
    <location>
        <position position="214"/>
    </location>
    <ligand>
        <name>ATP</name>
        <dbReference type="ChEBI" id="CHEBI:30616"/>
    </ligand>
</feature>
<feature type="binding site" evidence="1">
    <location>
        <position position="215"/>
    </location>
    <ligand>
        <name>Mg(2+)</name>
        <dbReference type="ChEBI" id="CHEBI:18420"/>
        <label>5</label>
    </ligand>
</feature>
<feature type="binding site" evidence="1">
    <location>
        <position position="263"/>
    </location>
    <ligand>
        <name>substrate</name>
    </ligand>
</feature>
<feature type="binding site" evidence="1">
    <location>
        <position position="319"/>
    </location>
    <ligand>
        <name>substrate</name>
    </ligand>
</feature>
<organism>
    <name type="scientific">Buchnera aphidicola subsp. Acyrthosiphon pisum (strain APS)</name>
    <name type="common">Acyrthosiphon pisum symbiotic bacterium</name>
    <dbReference type="NCBI Taxonomy" id="107806"/>
    <lineage>
        <taxon>Bacteria</taxon>
        <taxon>Pseudomonadati</taxon>
        <taxon>Pseudomonadota</taxon>
        <taxon>Gammaproteobacteria</taxon>
        <taxon>Enterobacterales</taxon>
        <taxon>Erwiniaceae</taxon>
        <taxon>Buchnera</taxon>
    </lineage>
</organism>
<accession>P57532</accession>
<name>THIL_BUCAI</name>
<reference key="1">
    <citation type="journal article" date="2000" name="Nature">
        <title>Genome sequence of the endocellular bacterial symbiont of aphids Buchnera sp. APS.</title>
        <authorList>
            <person name="Shigenobu S."/>
            <person name="Watanabe H."/>
            <person name="Hattori M."/>
            <person name="Sakaki Y."/>
            <person name="Ishikawa H."/>
        </authorList>
    </citation>
    <scope>NUCLEOTIDE SEQUENCE [LARGE SCALE GENOMIC DNA]</scope>
    <source>
        <strain>APS</strain>
    </source>
</reference>
<protein>
    <recommendedName>
        <fullName evidence="1">Thiamine-monophosphate kinase</fullName>
        <shortName evidence="1">TMP kinase</shortName>
        <shortName evidence="1">Thiamine-phosphate kinase</shortName>
        <ecNumber evidence="1">2.7.4.16</ecNumber>
    </recommendedName>
</protein>